<dbReference type="EC" id="3.4.24.-" evidence="1"/>
<dbReference type="EMBL" id="CP001164">
    <property type="protein sequence ID" value="ACI35505.1"/>
    <property type="molecule type" value="Genomic_DNA"/>
</dbReference>
<dbReference type="RefSeq" id="WP_000984517.1">
    <property type="nucleotide sequence ID" value="NC_011353.1"/>
</dbReference>
<dbReference type="SMR" id="B5YQX2"/>
<dbReference type="MEROPS" id="M48.002"/>
<dbReference type="GeneID" id="93776079"/>
<dbReference type="KEGG" id="ecf:ECH74115_2561"/>
<dbReference type="HOGENOM" id="CLU_042266_1_0_6"/>
<dbReference type="GO" id="GO:0005886">
    <property type="term" value="C:plasma membrane"/>
    <property type="evidence" value="ECO:0007669"/>
    <property type="project" value="UniProtKB-SubCell"/>
</dbReference>
<dbReference type="GO" id="GO:0004222">
    <property type="term" value="F:metalloendopeptidase activity"/>
    <property type="evidence" value="ECO:0007669"/>
    <property type="project" value="UniProtKB-UniRule"/>
</dbReference>
<dbReference type="GO" id="GO:0008270">
    <property type="term" value="F:zinc ion binding"/>
    <property type="evidence" value="ECO:0007669"/>
    <property type="project" value="UniProtKB-UniRule"/>
</dbReference>
<dbReference type="GO" id="GO:0006508">
    <property type="term" value="P:proteolysis"/>
    <property type="evidence" value="ECO:0007669"/>
    <property type="project" value="UniProtKB-KW"/>
</dbReference>
<dbReference type="CDD" id="cd07335">
    <property type="entry name" value="M48B_HtpX_like"/>
    <property type="match status" value="1"/>
</dbReference>
<dbReference type="FunFam" id="3.30.2010.10:FF:000001">
    <property type="entry name" value="Protease HtpX"/>
    <property type="match status" value="1"/>
</dbReference>
<dbReference type="Gene3D" id="3.30.2010.10">
    <property type="entry name" value="Metalloproteases ('zincins'), catalytic domain"/>
    <property type="match status" value="1"/>
</dbReference>
<dbReference type="HAMAP" id="MF_00188">
    <property type="entry name" value="Pept_M48_protease_HtpX"/>
    <property type="match status" value="1"/>
</dbReference>
<dbReference type="InterPro" id="IPR050083">
    <property type="entry name" value="HtpX_protease"/>
</dbReference>
<dbReference type="InterPro" id="IPR022919">
    <property type="entry name" value="Pept_M48_protease_HtpX"/>
</dbReference>
<dbReference type="InterPro" id="IPR001915">
    <property type="entry name" value="Peptidase_M48"/>
</dbReference>
<dbReference type="NCBIfam" id="NF003965">
    <property type="entry name" value="PRK05457.1"/>
    <property type="match status" value="1"/>
</dbReference>
<dbReference type="PANTHER" id="PTHR43221">
    <property type="entry name" value="PROTEASE HTPX"/>
    <property type="match status" value="1"/>
</dbReference>
<dbReference type="PANTHER" id="PTHR43221:SF1">
    <property type="entry name" value="PROTEASE HTPX"/>
    <property type="match status" value="1"/>
</dbReference>
<dbReference type="Pfam" id="PF01435">
    <property type="entry name" value="Peptidase_M48"/>
    <property type="match status" value="1"/>
</dbReference>
<gene>
    <name evidence="1" type="primary">htpX</name>
    <name type="ordered locus">ECH74115_2561</name>
</gene>
<comment type="cofactor">
    <cofactor evidence="1">
        <name>Zn(2+)</name>
        <dbReference type="ChEBI" id="CHEBI:29105"/>
    </cofactor>
    <text evidence="1">Binds 1 zinc ion per subunit.</text>
</comment>
<comment type="subcellular location">
    <subcellularLocation>
        <location evidence="1">Cell inner membrane</location>
        <topology evidence="1">Multi-pass membrane protein</topology>
    </subcellularLocation>
</comment>
<comment type="similarity">
    <text evidence="1">Belongs to the peptidase M48B family.</text>
</comment>
<accession>B5YQX2</accession>
<keyword id="KW-0997">Cell inner membrane</keyword>
<keyword id="KW-1003">Cell membrane</keyword>
<keyword id="KW-0378">Hydrolase</keyword>
<keyword id="KW-0472">Membrane</keyword>
<keyword id="KW-0479">Metal-binding</keyword>
<keyword id="KW-0482">Metalloprotease</keyword>
<keyword id="KW-0645">Protease</keyword>
<keyword id="KW-0812">Transmembrane</keyword>
<keyword id="KW-1133">Transmembrane helix</keyword>
<keyword id="KW-0862">Zinc</keyword>
<name>HTPX_ECO5E</name>
<reference key="1">
    <citation type="journal article" date="2011" name="Proc. Natl. Acad. Sci. U.S.A.">
        <title>Genomic anatomy of Escherichia coli O157:H7 outbreaks.</title>
        <authorList>
            <person name="Eppinger M."/>
            <person name="Mammel M.K."/>
            <person name="Leclerc J.E."/>
            <person name="Ravel J."/>
            <person name="Cebula T.A."/>
        </authorList>
    </citation>
    <scope>NUCLEOTIDE SEQUENCE [LARGE SCALE GENOMIC DNA]</scope>
    <source>
        <strain>EC4115 / EHEC</strain>
    </source>
</reference>
<organism>
    <name type="scientific">Escherichia coli O157:H7 (strain EC4115 / EHEC)</name>
    <dbReference type="NCBI Taxonomy" id="444450"/>
    <lineage>
        <taxon>Bacteria</taxon>
        <taxon>Pseudomonadati</taxon>
        <taxon>Pseudomonadota</taxon>
        <taxon>Gammaproteobacteria</taxon>
        <taxon>Enterobacterales</taxon>
        <taxon>Enterobacteriaceae</taxon>
        <taxon>Escherichia</taxon>
    </lineage>
</organism>
<evidence type="ECO:0000255" key="1">
    <source>
        <dbReference type="HAMAP-Rule" id="MF_00188"/>
    </source>
</evidence>
<proteinExistence type="inferred from homology"/>
<feature type="chain" id="PRO_1000098816" description="Protease HtpX">
    <location>
        <begin position="1"/>
        <end position="293"/>
    </location>
</feature>
<feature type="transmembrane region" description="Helical" evidence="1">
    <location>
        <begin position="4"/>
        <end position="24"/>
    </location>
</feature>
<feature type="transmembrane region" description="Helical" evidence="1">
    <location>
        <begin position="34"/>
        <end position="54"/>
    </location>
</feature>
<feature type="transmembrane region" description="Helical" evidence="1">
    <location>
        <begin position="158"/>
        <end position="178"/>
    </location>
</feature>
<feature type="transmembrane region" description="Helical" evidence="1">
    <location>
        <begin position="193"/>
        <end position="213"/>
    </location>
</feature>
<feature type="active site" evidence="1">
    <location>
        <position position="140"/>
    </location>
</feature>
<feature type="binding site" evidence="1">
    <location>
        <position position="139"/>
    </location>
    <ligand>
        <name>Zn(2+)</name>
        <dbReference type="ChEBI" id="CHEBI:29105"/>
        <note>catalytic</note>
    </ligand>
</feature>
<feature type="binding site" evidence="1">
    <location>
        <position position="143"/>
    </location>
    <ligand>
        <name>Zn(2+)</name>
        <dbReference type="ChEBI" id="CHEBI:29105"/>
        <note>catalytic</note>
    </ligand>
</feature>
<feature type="binding site" evidence="1">
    <location>
        <position position="222"/>
    </location>
    <ligand>
        <name>Zn(2+)</name>
        <dbReference type="ChEBI" id="CHEBI:29105"/>
        <note>catalytic</note>
    </ligand>
</feature>
<protein>
    <recommendedName>
        <fullName evidence="1">Protease HtpX</fullName>
        <ecNumber evidence="1">3.4.24.-</ecNumber>
    </recommendedName>
    <alternativeName>
        <fullName evidence="1">Heat shock protein HtpX</fullName>
    </alternativeName>
</protein>
<sequence length="293" mass="31957">MMRIALFLLTNLAVMVVFGLVLSLTGIQSSSVQGLMIMALLFGFGGSFVSLLMSKWMALRSVGGEVIEQPRNERERWLVNTVATQARQAGIAMPQVAIYHAPDINAFATGARRDASLVAVSTGLLQNMSPDEAEAVIAHEISHIANGDMVTMTLIQGVVNTFVIFISRILAQLAAGFMGGNRDEGEESNGNPLIYFAVATVLELVFGILASIITMWFSRHREFHADAGSAKLVGREKMIAALQRLKTSYEPQEATSMMAFCINGKSKSLSELFMTHPPLDKRIEALRTGEYLK</sequence>